<organism>
    <name type="scientific">Chlamydia trachomatis serovar D (strain ATCC VR-885 / DSM 19411 / UW-3/Cx)</name>
    <dbReference type="NCBI Taxonomy" id="272561"/>
    <lineage>
        <taxon>Bacteria</taxon>
        <taxon>Pseudomonadati</taxon>
        <taxon>Chlamydiota</taxon>
        <taxon>Chlamydiia</taxon>
        <taxon>Chlamydiales</taxon>
        <taxon>Chlamydiaceae</taxon>
        <taxon>Chlamydia/Chlamydophila group</taxon>
        <taxon>Chlamydia</taxon>
    </lineage>
</organism>
<feature type="chain" id="PRO_0000113924" description="Transcription termination/antitermination protein NusG">
    <location>
        <begin position="1"/>
        <end position="182"/>
    </location>
</feature>
<dbReference type="EMBL" id="AE001273">
    <property type="protein sequence ID" value="AAC67913.1"/>
    <property type="molecule type" value="Genomic_DNA"/>
</dbReference>
<dbReference type="PIR" id="E71528">
    <property type="entry name" value="E71528"/>
</dbReference>
<dbReference type="RefSeq" id="NP_219825.1">
    <property type="nucleotide sequence ID" value="NC_000117.1"/>
</dbReference>
<dbReference type="RefSeq" id="WP_009872557.1">
    <property type="nucleotide sequence ID" value="NC_000117.1"/>
</dbReference>
<dbReference type="SMR" id="O84322"/>
<dbReference type="FunCoup" id="O84322">
    <property type="interactions" value="276"/>
</dbReference>
<dbReference type="STRING" id="272561.CT_320"/>
<dbReference type="EnsemblBacteria" id="AAC67913">
    <property type="protein sequence ID" value="AAC67913"/>
    <property type="gene ID" value="CT_320"/>
</dbReference>
<dbReference type="GeneID" id="884799"/>
<dbReference type="KEGG" id="ctr:CT_320"/>
<dbReference type="PATRIC" id="fig|272561.5.peg.342"/>
<dbReference type="HOGENOM" id="CLU_067287_1_0_0"/>
<dbReference type="InParanoid" id="O84322"/>
<dbReference type="OrthoDB" id="9809075at2"/>
<dbReference type="Proteomes" id="UP000000431">
    <property type="component" value="Chromosome"/>
</dbReference>
<dbReference type="GO" id="GO:0005829">
    <property type="term" value="C:cytosol"/>
    <property type="evidence" value="ECO:0000318"/>
    <property type="project" value="GO_Central"/>
</dbReference>
<dbReference type="GO" id="GO:0006353">
    <property type="term" value="P:DNA-templated transcription termination"/>
    <property type="evidence" value="ECO:0007669"/>
    <property type="project" value="UniProtKB-UniRule"/>
</dbReference>
<dbReference type="GO" id="GO:0032784">
    <property type="term" value="P:regulation of DNA-templated transcription elongation"/>
    <property type="evidence" value="ECO:0007669"/>
    <property type="project" value="InterPro"/>
</dbReference>
<dbReference type="GO" id="GO:0031564">
    <property type="term" value="P:transcription antitermination"/>
    <property type="evidence" value="ECO:0007669"/>
    <property type="project" value="UniProtKB-UniRule"/>
</dbReference>
<dbReference type="GO" id="GO:0140673">
    <property type="term" value="P:transcription elongation-coupled chromatin remodeling"/>
    <property type="evidence" value="ECO:0007669"/>
    <property type="project" value="InterPro"/>
</dbReference>
<dbReference type="CDD" id="cd06091">
    <property type="entry name" value="KOW_NusG"/>
    <property type="match status" value="1"/>
</dbReference>
<dbReference type="CDD" id="cd09891">
    <property type="entry name" value="NGN_Bact_1"/>
    <property type="match status" value="1"/>
</dbReference>
<dbReference type="Gene3D" id="2.30.30.30">
    <property type="match status" value="1"/>
</dbReference>
<dbReference type="Gene3D" id="3.30.70.940">
    <property type="entry name" value="NusG, N-terminal domain"/>
    <property type="match status" value="1"/>
</dbReference>
<dbReference type="HAMAP" id="MF_00948">
    <property type="entry name" value="NusG"/>
    <property type="match status" value="1"/>
</dbReference>
<dbReference type="InterPro" id="IPR005824">
    <property type="entry name" value="KOW"/>
</dbReference>
<dbReference type="InterPro" id="IPR047050">
    <property type="entry name" value="NGN"/>
</dbReference>
<dbReference type="InterPro" id="IPR006645">
    <property type="entry name" value="NGN-like_dom"/>
</dbReference>
<dbReference type="InterPro" id="IPR036735">
    <property type="entry name" value="NGN_dom_sf"/>
</dbReference>
<dbReference type="InterPro" id="IPR043425">
    <property type="entry name" value="NusG-like"/>
</dbReference>
<dbReference type="InterPro" id="IPR014722">
    <property type="entry name" value="Rib_uL2_dom2"/>
</dbReference>
<dbReference type="InterPro" id="IPR001062">
    <property type="entry name" value="Transcrpt_antiterm_NusG"/>
</dbReference>
<dbReference type="InterPro" id="IPR008991">
    <property type="entry name" value="Translation_prot_SH3-like_sf"/>
</dbReference>
<dbReference type="NCBIfam" id="TIGR00922">
    <property type="entry name" value="nusG"/>
    <property type="match status" value="1"/>
</dbReference>
<dbReference type="PANTHER" id="PTHR30265">
    <property type="entry name" value="RHO-INTERACTING TRANSCRIPTION TERMINATION FACTOR NUSG"/>
    <property type="match status" value="1"/>
</dbReference>
<dbReference type="PANTHER" id="PTHR30265:SF2">
    <property type="entry name" value="TRANSCRIPTION TERMINATION_ANTITERMINATION PROTEIN NUSG"/>
    <property type="match status" value="1"/>
</dbReference>
<dbReference type="Pfam" id="PF02357">
    <property type="entry name" value="NusG"/>
    <property type="match status" value="1"/>
</dbReference>
<dbReference type="PRINTS" id="PR00338">
    <property type="entry name" value="NUSGTNSCPFCT"/>
</dbReference>
<dbReference type="SMART" id="SM00739">
    <property type="entry name" value="KOW"/>
    <property type="match status" value="1"/>
</dbReference>
<dbReference type="SMART" id="SM00738">
    <property type="entry name" value="NGN"/>
    <property type="match status" value="1"/>
</dbReference>
<dbReference type="SUPFAM" id="SSF82679">
    <property type="entry name" value="N-utilization substance G protein NusG, N-terminal domain"/>
    <property type="match status" value="1"/>
</dbReference>
<dbReference type="SUPFAM" id="SSF50104">
    <property type="entry name" value="Translation proteins SH3-like domain"/>
    <property type="match status" value="1"/>
</dbReference>
<sequence>MFKWYVVQVFTAQEKKVKKSLEDFKEASGMSDFIQQIILPSENVMEVKKGEHKIVEKYIWPGYLLVKMHLTDESWSYVKKTQGVVEFLGGGAPVALSEEEVKNILADLEEKKSGVVQKHKFEVGSQVKINDGVFVNFVGVVSEVFHDKGRLSVMVSIFGRETRVDDLEFWQVEEVVPGQESE</sequence>
<protein>
    <recommendedName>
        <fullName evidence="1">Transcription termination/antitermination protein NusG</fullName>
    </recommendedName>
</protein>
<proteinExistence type="inferred from homology"/>
<keyword id="KW-1185">Reference proteome</keyword>
<keyword id="KW-0804">Transcription</keyword>
<keyword id="KW-0889">Transcription antitermination</keyword>
<keyword id="KW-0805">Transcription regulation</keyword>
<keyword id="KW-0806">Transcription termination</keyword>
<gene>
    <name evidence="1" type="primary">nusG</name>
    <name type="ordered locus">CT_320</name>
</gene>
<name>NUSG_CHLTR</name>
<accession>O84322</accession>
<comment type="function">
    <text evidence="1">Participates in transcription elongation, termination and antitermination.</text>
</comment>
<comment type="similarity">
    <text evidence="1">Belongs to the NusG family.</text>
</comment>
<evidence type="ECO:0000255" key="1">
    <source>
        <dbReference type="HAMAP-Rule" id="MF_00948"/>
    </source>
</evidence>
<reference key="1">
    <citation type="journal article" date="1998" name="Science">
        <title>Genome sequence of an obligate intracellular pathogen of humans: Chlamydia trachomatis.</title>
        <authorList>
            <person name="Stephens R.S."/>
            <person name="Kalman S."/>
            <person name="Lammel C.J."/>
            <person name="Fan J."/>
            <person name="Marathe R."/>
            <person name="Aravind L."/>
            <person name="Mitchell W.P."/>
            <person name="Olinger L."/>
            <person name="Tatusov R.L."/>
            <person name="Zhao Q."/>
            <person name="Koonin E.V."/>
            <person name="Davis R.W."/>
        </authorList>
    </citation>
    <scope>NUCLEOTIDE SEQUENCE [LARGE SCALE GENOMIC DNA]</scope>
    <source>
        <strain>ATCC VR-885 / DSM 19411 / UW-3/Cx</strain>
    </source>
</reference>